<organism>
    <name type="scientific">Bos taurus</name>
    <name type="common">Bovine</name>
    <dbReference type="NCBI Taxonomy" id="9913"/>
    <lineage>
        <taxon>Eukaryota</taxon>
        <taxon>Metazoa</taxon>
        <taxon>Chordata</taxon>
        <taxon>Craniata</taxon>
        <taxon>Vertebrata</taxon>
        <taxon>Euteleostomi</taxon>
        <taxon>Mammalia</taxon>
        <taxon>Eutheria</taxon>
        <taxon>Laurasiatheria</taxon>
        <taxon>Artiodactyla</taxon>
        <taxon>Ruminantia</taxon>
        <taxon>Pecora</taxon>
        <taxon>Bovidae</taxon>
        <taxon>Bovinae</taxon>
        <taxon>Bos</taxon>
    </lineage>
</organism>
<protein>
    <recommendedName>
        <fullName>Keratin, type II cytoskeletal 60 kDa, component III</fullName>
    </recommendedName>
</protein>
<reference key="1">
    <citation type="journal article" date="1984" name="Differentiation">
        <title>Amino acid sequence diversity between bovine epidermal cytokeratin polypeptides of the basic (type II) subfamily as determined from cDNA clones.</title>
        <authorList>
            <person name="Jorcano J.L."/>
            <person name="Franz J.K."/>
            <person name="Franke W.W."/>
        </authorList>
    </citation>
    <scope>NUCLEOTIDE SEQUENCE [MRNA]</scope>
</reference>
<dbReference type="EMBL" id="K03535">
    <property type="protein sequence ID" value="AAA30602.1"/>
    <property type="molecule type" value="mRNA"/>
</dbReference>
<dbReference type="PIR" id="A02947">
    <property type="entry name" value="A02947"/>
</dbReference>
<dbReference type="SMR" id="P04261"/>
<dbReference type="PeptideAtlas" id="P04261"/>
<dbReference type="InParanoid" id="P04261"/>
<dbReference type="Proteomes" id="UP000009136">
    <property type="component" value="Unplaced"/>
</dbReference>
<dbReference type="GO" id="GO:0005882">
    <property type="term" value="C:intermediate filament"/>
    <property type="evidence" value="ECO:0007669"/>
    <property type="project" value="UniProtKB-KW"/>
</dbReference>
<dbReference type="FunFam" id="1.20.5.170:FF:000004">
    <property type="entry name" value="Keratin, type II cytoskeletal 5"/>
    <property type="match status" value="1"/>
</dbReference>
<dbReference type="Gene3D" id="1.20.5.170">
    <property type="match status" value="1"/>
</dbReference>
<dbReference type="InterPro" id="IPR018039">
    <property type="entry name" value="IF_conserved"/>
</dbReference>
<dbReference type="InterPro" id="IPR039008">
    <property type="entry name" value="IF_rod_dom"/>
</dbReference>
<dbReference type="PANTHER" id="PTHR45616">
    <property type="entry name" value="GATA-TYPE DOMAIN-CONTAINING PROTEIN"/>
    <property type="match status" value="1"/>
</dbReference>
<dbReference type="PANTHER" id="PTHR45616:SF32">
    <property type="entry name" value="KERATIN, TYPE II CYTOSKELETAL 5"/>
    <property type="match status" value="1"/>
</dbReference>
<dbReference type="Pfam" id="PF00038">
    <property type="entry name" value="Filament"/>
    <property type="match status" value="1"/>
</dbReference>
<dbReference type="SUPFAM" id="SSF64593">
    <property type="entry name" value="Intermediate filament protein, coiled coil region"/>
    <property type="match status" value="1"/>
</dbReference>
<dbReference type="PROSITE" id="PS00226">
    <property type="entry name" value="IF_ROD_1"/>
    <property type="match status" value="1"/>
</dbReference>
<dbReference type="PROSITE" id="PS51842">
    <property type="entry name" value="IF_ROD_2"/>
    <property type="match status" value="1"/>
</dbReference>
<proteinExistence type="evidence at transcript level"/>
<keyword id="KW-0175">Coiled coil</keyword>
<keyword id="KW-0403">Intermediate filament</keyword>
<keyword id="KW-0416">Keratin</keyword>
<keyword id="KW-1185">Reference proteome</keyword>
<evidence type="ECO:0000255" key="1">
    <source>
        <dbReference type="PROSITE-ProRule" id="PRU01188"/>
    </source>
</evidence>
<evidence type="ECO:0000256" key="2">
    <source>
        <dbReference type="SAM" id="MobiDB-lite"/>
    </source>
</evidence>
<name>K2C3_BOVIN</name>
<accession>P04261</accession>
<comment type="subunit">
    <text>Heterotetramer of two type I and two type II keratins.</text>
</comment>
<comment type="miscellaneous">
    <text>There are two types of cytoskeletal and microfibrillar keratin: I (acidic; 40-55 kDa) and II (neutral to basic; 56-70 kDa).</text>
</comment>
<comment type="similarity">
    <text evidence="1">Belongs to the intermediate filament family.</text>
</comment>
<sequence length="182" mass="17560">ERGELALKDARSKLADVEDALQKAKQDMARLLREYQELMNTKLALDVEIATYRKLLEGEECRLSGEGVGPVNISVVTNTVSSGYGGGSGFGGGLGGGLGGGLGGGLGGGLGGGLGSGLGGGGSSSFYSSSSGGVGLGGGLSVGGSGFSASSGRSLGFGSGGGSSSSVKFVSTTSSSRKSFKS</sequence>
<feature type="chain" id="PRO_0000063730" description="Keratin, type II cytoskeletal 60 kDa, component III">
    <location>
        <begin position="1" status="less than"/>
        <end position="182"/>
    </location>
</feature>
<feature type="domain" description="IF rod" evidence="1">
    <location>
        <begin position="1" status="less than"/>
        <end position="63"/>
    </location>
</feature>
<feature type="region of interest" description="Coil 2">
    <location>
        <begin position="1" status="less than"/>
        <end position="63"/>
    </location>
</feature>
<feature type="region of interest" description="Tail">
    <location>
        <begin position="63"/>
        <end position="182"/>
    </location>
</feature>
<feature type="region of interest" description="Disordered" evidence="2">
    <location>
        <begin position="157"/>
        <end position="182"/>
    </location>
</feature>
<feature type="compositionally biased region" description="Low complexity" evidence="2">
    <location>
        <begin position="164"/>
        <end position="182"/>
    </location>
</feature>
<feature type="site" description="Stutter">
    <location>
        <position position="1"/>
    </location>
</feature>
<feature type="non-terminal residue">
    <location>
        <position position="1"/>
    </location>
</feature>